<gene>
    <name evidence="2" type="primary">tuf1</name>
    <name type="synonym">tufA</name>
    <name type="ordered locus">SBO_3320</name>
</gene>
<gene>
    <name evidence="2" type="primary">tuf2</name>
    <name type="synonym">tufB</name>
    <name type="ordered locus">SBO_4000</name>
</gene>
<comment type="function">
    <text evidence="2">GTP hydrolase that promotes the GTP-dependent binding of aminoacyl-tRNA to the A-site of ribosomes during protein biosynthesis.</text>
</comment>
<comment type="catalytic activity">
    <reaction evidence="2">
        <text>GTP + H2O = GDP + phosphate + H(+)</text>
        <dbReference type="Rhea" id="RHEA:19669"/>
        <dbReference type="ChEBI" id="CHEBI:15377"/>
        <dbReference type="ChEBI" id="CHEBI:15378"/>
        <dbReference type="ChEBI" id="CHEBI:37565"/>
        <dbReference type="ChEBI" id="CHEBI:43474"/>
        <dbReference type="ChEBI" id="CHEBI:58189"/>
        <dbReference type="EC" id="3.6.5.3"/>
    </reaction>
    <physiologicalReaction direction="left-to-right" evidence="2">
        <dbReference type="Rhea" id="RHEA:19670"/>
    </physiologicalReaction>
</comment>
<comment type="subunit">
    <text evidence="2">Monomer.</text>
</comment>
<comment type="subcellular location">
    <subcellularLocation>
        <location evidence="2">Cytoplasm</location>
    </subcellularLocation>
</comment>
<comment type="similarity">
    <text evidence="2">Belongs to the TRAFAC class translation factor GTPase superfamily. Classic translation factor GTPase family. EF-Tu/EF-1A subfamily.</text>
</comment>
<proteinExistence type="inferred from homology"/>
<sequence>MSKEKFERTKPHVNVGTIGHVDHGKTTLTAAITTVLAKTYGGAARAFDQIDNAPEEKARGITINTSHVEYDTPTRHYAHVDCPGHADYVKNMITGAAQMDGAILVVAATDGPMPQTREHILLGRQVGVPYIIVFLNKCDMVDDEELLELVEMEVRELLSQYDFPGDDTPIVRGSALKALEGDAEWEAKILELAGFLDSYIPEPERAIDKPFLLPIEDVFSISGRGTVVTGRVERGIIKVGEEVEIVGIKETQKSTCTGVEMFRKLLDEGRAGENVGVLLRGIKREEIERGQVLAKPGTIKPHTKFESEVYILSKDEGGRHTPFFKGYRPQFYFRTTDVTGTIELPEGVEMVMPGDNIKMVVTLIHPIAMDDGLRFAIREGGRTVGAGVVAKVLG</sequence>
<reference key="1">
    <citation type="journal article" date="2005" name="Nucleic Acids Res.">
        <title>Genome dynamics and diversity of Shigella species, the etiologic agents of bacillary dysentery.</title>
        <authorList>
            <person name="Yang F."/>
            <person name="Yang J."/>
            <person name="Zhang X."/>
            <person name="Chen L."/>
            <person name="Jiang Y."/>
            <person name="Yan Y."/>
            <person name="Tang X."/>
            <person name="Wang J."/>
            <person name="Xiong Z."/>
            <person name="Dong J."/>
            <person name="Xue Y."/>
            <person name="Zhu Y."/>
            <person name="Xu X."/>
            <person name="Sun L."/>
            <person name="Chen S."/>
            <person name="Nie H."/>
            <person name="Peng J."/>
            <person name="Xu J."/>
            <person name="Wang Y."/>
            <person name="Yuan Z."/>
            <person name="Wen Y."/>
            <person name="Yao Z."/>
            <person name="Shen Y."/>
            <person name="Qiang B."/>
            <person name="Hou Y."/>
            <person name="Yu J."/>
            <person name="Jin Q."/>
        </authorList>
    </citation>
    <scope>NUCLEOTIDE SEQUENCE [LARGE SCALE GENOMIC DNA]</scope>
    <source>
        <strain>Sb227</strain>
    </source>
</reference>
<feature type="chain" id="PRO_0000337538" description="Elongation factor Tu">
    <location>
        <begin position="1"/>
        <end position="394"/>
    </location>
</feature>
<feature type="domain" description="tr-type G">
    <location>
        <begin position="10"/>
        <end position="204"/>
    </location>
</feature>
<feature type="region of interest" description="G1" evidence="1">
    <location>
        <begin position="19"/>
        <end position="26"/>
    </location>
</feature>
<feature type="region of interest" description="G2" evidence="1">
    <location>
        <begin position="60"/>
        <end position="64"/>
    </location>
</feature>
<feature type="region of interest" description="G3" evidence="1">
    <location>
        <begin position="81"/>
        <end position="84"/>
    </location>
</feature>
<feature type="region of interest" description="G4" evidence="1">
    <location>
        <begin position="136"/>
        <end position="139"/>
    </location>
</feature>
<feature type="region of interest" description="G5" evidence="1">
    <location>
        <begin position="174"/>
        <end position="176"/>
    </location>
</feature>
<feature type="binding site" evidence="2">
    <location>
        <begin position="19"/>
        <end position="26"/>
    </location>
    <ligand>
        <name>GTP</name>
        <dbReference type="ChEBI" id="CHEBI:37565"/>
    </ligand>
</feature>
<feature type="binding site" evidence="2">
    <location>
        <position position="26"/>
    </location>
    <ligand>
        <name>Mg(2+)</name>
        <dbReference type="ChEBI" id="CHEBI:18420"/>
    </ligand>
</feature>
<feature type="binding site" evidence="2">
    <location>
        <begin position="81"/>
        <end position="85"/>
    </location>
    <ligand>
        <name>GTP</name>
        <dbReference type="ChEBI" id="CHEBI:37565"/>
    </ligand>
</feature>
<feature type="binding site" evidence="2">
    <location>
        <begin position="136"/>
        <end position="139"/>
    </location>
    <ligand>
        <name>GTP</name>
        <dbReference type="ChEBI" id="CHEBI:37565"/>
    </ligand>
</feature>
<feature type="modified residue" description="N6-acetyllysine" evidence="1">
    <location>
        <position position="314"/>
    </location>
</feature>
<evidence type="ECO:0000250" key="1"/>
<evidence type="ECO:0000255" key="2">
    <source>
        <dbReference type="HAMAP-Rule" id="MF_00118"/>
    </source>
</evidence>
<protein>
    <recommendedName>
        <fullName evidence="2">Elongation factor Tu</fullName>
        <shortName evidence="2">EF-Tu</shortName>
        <ecNumber evidence="2">3.6.5.3</ecNumber>
    </recommendedName>
</protein>
<dbReference type="EC" id="3.6.5.3" evidence="2"/>
<dbReference type="EMBL" id="CP000036">
    <property type="protein sequence ID" value="ABB67808.1"/>
    <property type="molecule type" value="Genomic_DNA"/>
</dbReference>
<dbReference type="EMBL" id="CP000036">
    <property type="protein sequence ID" value="ABB68441.1"/>
    <property type="molecule type" value="Genomic_DNA"/>
</dbReference>
<dbReference type="SMR" id="Q31VV0"/>
<dbReference type="KEGG" id="sbo:SBO_3320"/>
<dbReference type="KEGG" id="sbo:SBO_4000"/>
<dbReference type="HOGENOM" id="CLU_007265_0_2_6"/>
<dbReference type="Proteomes" id="UP000007067">
    <property type="component" value="Chromosome"/>
</dbReference>
<dbReference type="GO" id="GO:0005829">
    <property type="term" value="C:cytosol"/>
    <property type="evidence" value="ECO:0007669"/>
    <property type="project" value="TreeGrafter"/>
</dbReference>
<dbReference type="GO" id="GO:0005525">
    <property type="term" value="F:GTP binding"/>
    <property type="evidence" value="ECO:0007669"/>
    <property type="project" value="UniProtKB-UniRule"/>
</dbReference>
<dbReference type="GO" id="GO:0003924">
    <property type="term" value="F:GTPase activity"/>
    <property type="evidence" value="ECO:0007669"/>
    <property type="project" value="InterPro"/>
</dbReference>
<dbReference type="GO" id="GO:0097216">
    <property type="term" value="F:guanosine tetraphosphate binding"/>
    <property type="evidence" value="ECO:0007669"/>
    <property type="project" value="UniProtKB-ARBA"/>
</dbReference>
<dbReference type="GO" id="GO:0003746">
    <property type="term" value="F:translation elongation factor activity"/>
    <property type="evidence" value="ECO:0007669"/>
    <property type="project" value="UniProtKB-UniRule"/>
</dbReference>
<dbReference type="CDD" id="cd01884">
    <property type="entry name" value="EF_Tu"/>
    <property type="match status" value="1"/>
</dbReference>
<dbReference type="CDD" id="cd03697">
    <property type="entry name" value="EFTU_II"/>
    <property type="match status" value="1"/>
</dbReference>
<dbReference type="CDD" id="cd03707">
    <property type="entry name" value="EFTU_III"/>
    <property type="match status" value="1"/>
</dbReference>
<dbReference type="FunFam" id="2.40.30.10:FF:000001">
    <property type="entry name" value="Elongation factor Tu"/>
    <property type="match status" value="1"/>
</dbReference>
<dbReference type="FunFam" id="3.40.50.300:FF:000003">
    <property type="entry name" value="Elongation factor Tu"/>
    <property type="match status" value="1"/>
</dbReference>
<dbReference type="Gene3D" id="3.40.50.300">
    <property type="entry name" value="P-loop containing nucleotide triphosphate hydrolases"/>
    <property type="match status" value="1"/>
</dbReference>
<dbReference type="Gene3D" id="2.40.30.10">
    <property type="entry name" value="Translation factors"/>
    <property type="match status" value="2"/>
</dbReference>
<dbReference type="HAMAP" id="MF_00118_B">
    <property type="entry name" value="EF_Tu_B"/>
    <property type="match status" value="1"/>
</dbReference>
<dbReference type="InterPro" id="IPR041709">
    <property type="entry name" value="EF-Tu_GTP-bd"/>
</dbReference>
<dbReference type="InterPro" id="IPR050055">
    <property type="entry name" value="EF-Tu_GTPase"/>
</dbReference>
<dbReference type="InterPro" id="IPR004161">
    <property type="entry name" value="EFTu-like_2"/>
</dbReference>
<dbReference type="InterPro" id="IPR033720">
    <property type="entry name" value="EFTU_2"/>
</dbReference>
<dbReference type="InterPro" id="IPR031157">
    <property type="entry name" value="G_TR_CS"/>
</dbReference>
<dbReference type="InterPro" id="IPR027417">
    <property type="entry name" value="P-loop_NTPase"/>
</dbReference>
<dbReference type="InterPro" id="IPR005225">
    <property type="entry name" value="Small_GTP-bd"/>
</dbReference>
<dbReference type="InterPro" id="IPR000795">
    <property type="entry name" value="T_Tr_GTP-bd_dom"/>
</dbReference>
<dbReference type="InterPro" id="IPR009000">
    <property type="entry name" value="Transl_B-barrel_sf"/>
</dbReference>
<dbReference type="InterPro" id="IPR009001">
    <property type="entry name" value="Transl_elong_EF1A/Init_IF2_C"/>
</dbReference>
<dbReference type="InterPro" id="IPR004541">
    <property type="entry name" value="Transl_elong_EFTu/EF1A_bac/org"/>
</dbReference>
<dbReference type="InterPro" id="IPR004160">
    <property type="entry name" value="Transl_elong_EFTu/EF1A_C"/>
</dbReference>
<dbReference type="NCBIfam" id="TIGR00485">
    <property type="entry name" value="EF-Tu"/>
    <property type="match status" value="1"/>
</dbReference>
<dbReference type="NCBIfam" id="NF000766">
    <property type="entry name" value="PRK00049.1"/>
    <property type="match status" value="1"/>
</dbReference>
<dbReference type="NCBIfam" id="NF009372">
    <property type="entry name" value="PRK12735.1"/>
    <property type="match status" value="1"/>
</dbReference>
<dbReference type="NCBIfam" id="NF009373">
    <property type="entry name" value="PRK12736.1"/>
    <property type="match status" value="1"/>
</dbReference>
<dbReference type="NCBIfam" id="TIGR00231">
    <property type="entry name" value="small_GTP"/>
    <property type="match status" value="1"/>
</dbReference>
<dbReference type="PANTHER" id="PTHR43721:SF22">
    <property type="entry name" value="ELONGATION FACTOR TU, MITOCHONDRIAL"/>
    <property type="match status" value="1"/>
</dbReference>
<dbReference type="PANTHER" id="PTHR43721">
    <property type="entry name" value="ELONGATION FACTOR TU-RELATED"/>
    <property type="match status" value="1"/>
</dbReference>
<dbReference type="Pfam" id="PF00009">
    <property type="entry name" value="GTP_EFTU"/>
    <property type="match status" value="1"/>
</dbReference>
<dbReference type="Pfam" id="PF03144">
    <property type="entry name" value="GTP_EFTU_D2"/>
    <property type="match status" value="1"/>
</dbReference>
<dbReference type="Pfam" id="PF03143">
    <property type="entry name" value="GTP_EFTU_D3"/>
    <property type="match status" value="1"/>
</dbReference>
<dbReference type="PRINTS" id="PR00315">
    <property type="entry name" value="ELONGATNFCT"/>
</dbReference>
<dbReference type="SUPFAM" id="SSF50465">
    <property type="entry name" value="EF-Tu/eEF-1alpha/eIF2-gamma C-terminal domain"/>
    <property type="match status" value="1"/>
</dbReference>
<dbReference type="SUPFAM" id="SSF52540">
    <property type="entry name" value="P-loop containing nucleoside triphosphate hydrolases"/>
    <property type="match status" value="1"/>
</dbReference>
<dbReference type="SUPFAM" id="SSF50447">
    <property type="entry name" value="Translation proteins"/>
    <property type="match status" value="1"/>
</dbReference>
<dbReference type="PROSITE" id="PS00301">
    <property type="entry name" value="G_TR_1"/>
    <property type="match status" value="1"/>
</dbReference>
<dbReference type="PROSITE" id="PS51722">
    <property type="entry name" value="G_TR_2"/>
    <property type="match status" value="1"/>
</dbReference>
<organism>
    <name type="scientific">Shigella boydii serotype 4 (strain Sb227)</name>
    <dbReference type="NCBI Taxonomy" id="300268"/>
    <lineage>
        <taxon>Bacteria</taxon>
        <taxon>Pseudomonadati</taxon>
        <taxon>Pseudomonadota</taxon>
        <taxon>Gammaproteobacteria</taxon>
        <taxon>Enterobacterales</taxon>
        <taxon>Enterobacteriaceae</taxon>
        <taxon>Shigella</taxon>
    </lineage>
</organism>
<accession>Q31VV0</accession>
<keyword id="KW-0007">Acetylation</keyword>
<keyword id="KW-0963">Cytoplasm</keyword>
<keyword id="KW-0251">Elongation factor</keyword>
<keyword id="KW-0342">GTP-binding</keyword>
<keyword id="KW-0378">Hydrolase</keyword>
<keyword id="KW-0460">Magnesium</keyword>
<keyword id="KW-0479">Metal-binding</keyword>
<keyword id="KW-0547">Nucleotide-binding</keyword>
<keyword id="KW-0648">Protein biosynthesis</keyword>
<name>EFTU_SHIBS</name>